<name>THII_SHIB3</name>
<feature type="chain" id="PRO_1000090036" description="tRNA sulfurtransferase">
    <location>
        <begin position="1"/>
        <end position="482"/>
    </location>
</feature>
<feature type="domain" description="THUMP" evidence="1">
    <location>
        <begin position="61"/>
        <end position="165"/>
    </location>
</feature>
<feature type="domain" description="Rhodanese" evidence="1">
    <location>
        <begin position="404"/>
        <end position="482"/>
    </location>
</feature>
<feature type="active site" description="Cysteine persulfide intermediate" evidence="1">
    <location>
        <position position="456"/>
    </location>
</feature>
<feature type="binding site" evidence="1">
    <location>
        <begin position="183"/>
        <end position="184"/>
    </location>
    <ligand>
        <name>ATP</name>
        <dbReference type="ChEBI" id="CHEBI:30616"/>
    </ligand>
</feature>
<feature type="binding site" evidence="1">
    <location>
        <position position="265"/>
    </location>
    <ligand>
        <name>ATP</name>
        <dbReference type="ChEBI" id="CHEBI:30616"/>
    </ligand>
</feature>
<feature type="binding site" evidence="1">
    <location>
        <position position="287"/>
    </location>
    <ligand>
        <name>ATP</name>
        <dbReference type="ChEBI" id="CHEBI:30616"/>
    </ligand>
</feature>
<feature type="binding site" evidence="1">
    <location>
        <position position="296"/>
    </location>
    <ligand>
        <name>ATP</name>
        <dbReference type="ChEBI" id="CHEBI:30616"/>
    </ligand>
</feature>
<feature type="disulfide bond" description="Redox-active" evidence="1">
    <location>
        <begin position="344"/>
        <end position="456"/>
    </location>
</feature>
<sequence length="482" mass="55031">MKFIIKLFPEITIKSQSVRLRFIKILTGNIRNVLKHYDETLAVVRHWDNIEVRAKDENQRLAIRDALTRIPGIHHILEVEDVPFTDMHDIFEKALVQYRDQLEGKTFCVRVKRRGKHDFSSIDVERYVGGGLNQHIESARVKLTNPEVTVHLEVEDDRLLLIKGRYEGIGGFPIGTQEDVLSLISGGFDSGVSSYMLMRRGCRVHYCFFNLGGAAHEIGVRQVAHYLWNRFGSSHRVRFVAINFEPVVGEILEKIDDGQMGVILKRMMVRAASKVAERYGVQALVTGEALGQVSSQTLTNLRLIDNVSDTLILRPLISYDKEHIINLARQIGTEDFARTMPEYCGVISKSPTVKAVKSKIEAEEEKFDFSILDKVVEEANNVDIREIAQQTEQEVVEVETVNGFGPNDVILDIRSIDEQEDKPLKVEGIDVVSLPFYKLSTKFGDLDQNRTWLLWCERGVMSRLQALYLREQGFNNVKVYRL</sequence>
<proteinExistence type="inferred from homology"/>
<comment type="function">
    <text evidence="1">Catalyzes the ATP-dependent transfer of a sulfur to tRNA to produce 4-thiouridine in position 8 of tRNAs, which functions as a near-UV photosensor. Also catalyzes the transfer of sulfur to the sulfur carrier protein ThiS, forming ThiS-thiocarboxylate. This is a step in the synthesis of thiazole, in the thiamine biosynthesis pathway. The sulfur is donated as persulfide by IscS.</text>
</comment>
<comment type="catalytic activity">
    <reaction evidence="1">
        <text>[ThiI sulfur-carrier protein]-S-sulfanyl-L-cysteine + a uridine in tRNA + 2 reduced [2Fe-2S]-[ferredoxin] + ATP + H(+) = [ThiI sulfur-carrier protein]-L-cysteine + a 4-thiouridine in tRNA + 2 oxidized [2Fe-2S]-[ferredoxin] + AMP + diphosphate</text>
        <dbReference type="Rhea" id="RHEA:24176"/>
        <dbReference type="Rhea" id="RHEA-COMP:10000"/>
        <dbReference type="Rhea" id="RHEA-COMP:10001"/>
        <dbReference type="Rhea" id="RHEA-COMP:13337"/>
        <dbReference type="Rhea" id="RHEA-COMP:13338"/>
        <dbReference type="Rhea" id="RHEA-COMP:13339"/>
        <dbReference type="Rhea" id="RHEA-COMP:13340"/>
        <dbReference type="ChEBI" id="CHEBI:15378"/>
        <dbReference type="ChEBI" id="CHEBI:29950"/>
        <dbReference type="ChEBI" id="CHEBI:30616"/>
        <dbReference type="ChEBI" id="CHEBI:33019"/>
        <dbReference type="ChEBI" id="CHEBI:33737"/>
        <dbReference type="ChEBI" id="CHEBI:33738"/>
        <dbReference type="ChEBI" id="CHEBI:61963"/>
        <dbReference type="ChEBI" id="CHEBI:65315"/>
        <dbReference type="ChEBI" id="CHEBI:136798"/>
        <dbReference type="ChEBI" id="CHEBI:456215"/>
        <dbReference type="EC" id="2.8.1.4"/>
    </reaction>
</comment>
<comment type="catalytic activity">
    <reaction evidence="1">
        <text>[ThiS sulfur-carrier protein]-C-terminal Gly-Gly-AMP + S-sulfanyl-L-cysteinyl-[cysteine desulfurase] + AH2 = [ThiS sulfur-carrier protein]-C-terminal-Gly-aminoethanethioate + L-cysteinyl-[cysteine desulfurase] + A + AMP + 2 H(+)</text>
        <dbReference type="Rhea" id="RHEA:43340"/>
        <dbReference type="Rhea" id="RHEA-COMP:12157"/>
        <dbReference type="Rhea" id="RHEA-COMP:12158"/>
        <dbReference type="Rhea" id="RHEA-COMP:12910"/>
        <dbReference type="Rhea" id="RHEA-COMP:19908"/>
        <dbReference type="ChEBI" id="CHEBI:13193"/>
        <dbReference type="ChEBI" id="CHEBI:15378"/>
        <dbReference type="ChEBI" id="CHEBI:17499"/>
        <dbReference type="ChEBI" id="CHEBI:29950"/>
        <dbReference type="ChEBI" id="CHEBI:61963"/>
        <dbReference type="ChEBI" id="CHEBI:90618"/>
        <dbReference type="ChEBI" id="CHEBI:232372"/>
        <dbReference type="ChEBI" id="CHEBI:456215"/>
    </reaction>
</comment>
<comment type="pathway">
    <text evidence="1">Cofactor biosynthesis; thiamine diphosphate biosynthesis.</text>
</comment>
<comment type="subcellular location">
    <subcellularLocation>
        <location evidence="1">Cytoplasm</location>
    </subcellularLocation>
</comment>
<comment type="similarity">
    <text evidence="1">Belongs to the ThiI family.</text>
</comment>
<keyword id="KW-0067">ATP-binding</keyword>
<keyword id="KW-0963">Cytoplasm</keyword>
<keyword id="KW-1015">Disulfide bond</keyword>
<keyword id="KW-0547">Nucleotide-binding</keyword>
<keyword id="KW-0676">Redox-active center</keyword>
<keyword id="KW-1185">Reference proteome</keyword>
<keyword id="KW-0694">RNA-binding</keyword>
<keyword id="KW-0784">Thiamine biosynthesis</keyword>
<keyword id="KW-0808">Transferase</keyword>
<keyword id="KW-0820">tRNA-binding</keyword>
<accession>B2U4M7</accession>
<gene>
    <name evidence="1" type="primary">thiI</name>
    <name type="ordered locus">SbBS512_E0345</name>
</gene>
<evidence type="ECO:0000255" key="1">
    <source>
        <dbReference type="HAMAP-Rule" id="MF_00021"/>
    </source>
</evidence>
<dbReference type="EC" id="2.8.1.4" evidence="1"/>
<dbReference type="EMBL" id="CP001063">
    <property type="protein sequence ID" value="ACD07910.1"/>
    <property type="molecule type" value="Genomic_DNA"/>
</dbReference>
<dbReference type="RefSeq" id="WP_000668684.1">
    <property type="nucleotide sequence ID" value="NC_010658.1"/>
</dbReference>
<dbReference type="SMR" id="B2U4M7"/>
<dbReference type="STRING" id="344609.SbBS512_E0345"/>
<dbReference type="KEGG" id="sbc:SbBS512_E0345"/>
<dbReference type="HOGENOM" id="CLU_037952_4_1_6"/>
<dbReference type="UniPathway" id="UPA00060"/>
<dbReference type="Proteomes" id="UP000001030">
    <property type="component" value="Chromosome"/>
</dbReference>
<dbReference type="GO" id="GO:0005829">
    <property type="term" value="C:cytosol"/>
    <property type="evidence" value="ECO:0007669"/>
    <property type="project" value="TreeGrafter"/>
</dbReference>
<dbReference type="GO" id="GO:0005524">
    <property type="term" value="F:ATP binding"/>
    <property type="evidence" value="ECO:0007669"/>
    <property type="project" value="UniProtKB-UniRule"/>
</dbReference>
<dbReference type="GO" id="GO:0004810">
    <property type="term" value="F:CCA tRNA nucleotidyltransferase activity"/>
    <property type="evidence" value="ECO:0007669"/>
    <property type="project" value="InterPro"/>
</dbReference>
<dbReference type="GO" id="GO:0000049">
    <property type="term" value="F:tRNA binding"/>
    <property type="evidence" value="ECO:0007669"/>
    <property type="project" value="UniProtKB-UniRule"/>
</dbReference>
<dbReference type="GO" id="GO:0140741">
    <property type="term" value="F:tRNA-uracil-4 sulfurtransferase activity"/>
    <property type="evidence" value="ECO:0007669"/>
    <property type="project" value="UniProtKB-EC"/>
</dbReference>
<dbReference type="GO" id="GO:0009228">
    <property type="term" value="P:thiamine biosynthetic process"/>
    <property type="evidence" value="ECO:0007669"/>
    <property type="project" value="UniProtKB-KW"/>
</dbReference>
<dbReference type="GO" id="GO:0009229">
    <property type="term" value="P:thiamine diphosphate biosynthetic process"/>
    <property type="evidence" value="ECO:0007669"/>
    <property type="project" value="UniProtKB-UniRule"/>
</dbReference>
<dbReference type="GO" id="GO:0052837">
    <property type="term" value="P:thiazole biosynthetic process"/>
    <property type="evidence" value="ECO:0007669"/>
    <property type="project" value="InterPro"/>
</dbReference>
<dbReference type="GO" id="GO:0002937">
    <property type="term" value="P:tRNA 4-thiouridine biosynthesis"/>
    <property type="evidence" value="ECO:0007669"/>
    <property type="project" value="TreeGrafter"/>
</dbReference>
<dbReference type="CDD" id="cd01712">
    <property type="entry name" value="PPase_ThiI"/>
    <property type="match status" value="1"/>
</dbReference>
<dbReference type="CDD" id="cd00158">
    <property type="entry name" value="RHOD"/>
    <property type="match status" value="1"/>
</dbReference>
<dbReference type="CDD" id="cd11716">
    <property type="entry name" value="THUMP_ThiI"/>
    <property type="match status" value="1"/>
</dbReference>
<dbReference type="FunFam" id="3.30.2130.30:FF:000002">
    <property type="entry name" value="tRNA sulfurtransferase"/>
    <property type="match status" value="1"/>
</dbReference>
<dbReference type="FunFam" id="3.40.250.10:FF:000003">
    <property type="entry name" value="tRNA sulfurtransferase"/>
    <property type="match status" value="1"/>
</dbReference>
<dbReference type="FunFam" id="3.40.50.620:FF:000029">
    <property type="entry name" value="tRNA sulfurtransferase"/>
    <property type="match status" value="1"/>
</dbReference>
<dbReference type="Gene3D" id="3.30.2130.30">
    <property type="match status" value="1"/>
</dbReference>
<dbReference type="Gene3D" id="3.40.50.620">
    <property type="entry name" value="HUPs"/>
    <property type="match status" value="1"/>
</dbReference>
<dbReference type="Gene3D" id="3.40.250.10">
    <property type="entry name" value="Rhodanese-like domain"/>
    <property type="match status" value="1"/>
</dbReference>
<dbReference type="HAMAP" id="MF_00021">
    <property type="entry name" value="ThiI"/>
    <property type="match status" value="1"/>
</dbReference>
<dbReference type="InterPro" id="IPR001763">
    <property type="entry name" value="Rhodanese-like_dom"/>
</dbReference>
<dbReference type="InterPro" id="IPR036873">
    <property type="entry name" value="Rhodanese-like_dom_sf"/>
</dbReference>
<dbReference type="InterPro" id="IPR014729">
    <property type="entry name" value="Rossmann-like_a/b/a_fold"/>
</dbReference>
<dbReference type="InterPro" id="IPR020536">
    <property type="entry name" value="ThiI_AANH"/>
</dbReference>
<dbReference type="InterPro" id="IPR054173">
    <property type="entry name" value="ThiI_fer"/>
</dbReference>
<dbReference type="InterPro" id="IPR049961">
    <property type="entry name" value="ThiI_N"/>
</dbReference>
<dbReference type="InterPro" id="IPR026340">
    <property type="entry name" value="THII_Thiazole_biosynth_dom"/>
</dbReference>
<dbReference type="InterPro" id="IPR004114">
    <property type="entry name" value="THUMP_dom"/>
</dbReference>
<dbReference type="InterPro" id="IPR049962">
    <property type="entry name" value="THUMP_ThiI"/>
</dbReference>
<dbReference type="InterPro" id="IPR003720">
    <property type="entry name" value="tRNA_STrfase"/>
</dbReference>
<dbReference type="InterPro" id="IPR050102">
    <property type="entry name" value="tRNA_sulfurtransferase_ThiI"/>
</dbReference>
<dbReference type="NCBIfam" id="TIGR04271">
    <property type="entry name" value="ThiI_C_thiazole"/>
    <property type="match status" value="1"/>
</dbReference>
<dbReference type="NCBIfam" id="TIGR00342">
    <property type="entry name" value="tRNA uracil 4-sulfurtransferase ThiI"/>
    <property type="match status" value="1"/>
</dbReference>
<dbReference type="PANTHER" id="PTHR43209">
    <property type="entry name" value="TRNA SULFURTRANSFERASE"/>
    <property type="match status" value="1"/>
</dbReference>
<dbReference type="PANTHER" id="PTHR43209:SF1">
    <property type="entry name" value="TRNA SULFURTRANSFERASE"/>
    <property type="match status" value="1"/>
</dbReference>
<dbReference type="Pfam" id="PF02568">
    <property type="entry name" value="ThiI"/>
    <property type="match status" value="1"/>
</dbReference>
<dbReference type="Pfam" id="PF22025">
    <property type="entry name" value="ThiI_fer"/>
    <property type="match status" value="1"/>
</dbReference>
<dbReference type="Pfam" id="PF02926">
    <property type="entry name" value="THUMP"/>
    <property type="match status" value="1"/>
</dbReference>
<dbReference type="SMART" id="SM00981">
    <property type="entry name" value="THUMP"/>
    <property type="match status" value="1"/>
</dbReference>
<dbReference type="SUPFAM" id="SSF52402">
    <property type="entry name" value="Adenine nucleotide alpha hydrolases-like"/>
    <property type="match status" value="1"/>
</dbReference>
<dbReference type="SUPFAM" id="SSF52821">
    <property type="entry name" value="Rhodanese/Cell cycle control phosphatase"/>
    <property type="match status" value="1"/>
</dbReference>
<dbReference type="SUPFAM" id="SSF143437">
    <property type="entry name" value="THUMP domain-like"/>
    <property type="match status" value="1"/>
</dbReference>
<dbReference type="PROSITE" id="PS50206">
    <property type="entry name" value="RHODANESE_3"/>
    <property type="match status" value="1"/>
</dbReference>
<dbReference type="PROSITE" id="PS51165">
    <property type="entry name" value="THUMP"/>
    <property type="match status" value="1"/>
</dbReference>
<reference key="1">
    <citation type="submission" date="2008-05" db="EMBL/GenBank/DDBJ databases">
        <title>Complete sequence of Shigella boydii serotype 18 strain BS512.</title>
        <authorList>
            <person name="Rasko D.A."/>
            <person name="Rosovitz M."/>
            <person name="Maurelli A.T."/>
            <person name="Myers G."/>
            <person name="Seshadri R."/>
            <person name="Cer R."/>
            <person name="Jiang L."/>
            <person name="Ravel J."/>
            <person name="Sebastian Y."/>
        </authorList>
    </citation>
    <scope>NUCLEOTIDE SEQUENCE [LARGE SCALE GENOMIC DNA]</scope>
    <source>
        <strain>CDC 3083-94 / BS512</strain>
    </source>
</reference>
<organism>
    <name type="scientific">Shigella boydii serotype 18 (strain CDC 3083-94 / BS512)</name>
    <dbReference type="NCBI Taxonomy" id="344609"/>
    <lineage>
        <taxon>Bacteria</taxon>
        <taxon>Pseudomonadati</taxon>
        <taxon>Pseudomonadota</taxon>
        <taxon>Gammaproteobacteria</taxon>
        <taxon>Enterobacterales</taxon>
        <taxon>Enterobacteriaceae</taxon>
        <taxon>Shigella</taxon>
    </lineage>
</organism>
<protein>
    <recommendedName>
        <fullName evidence="1">tRNA sulfurtransferase</fullName>
        <ecNumber evidence="1">2.8.1.4</ecNumber>
    </recommendedName>
    <alternativeName>
        <fullName evidence="1">Sulfur carrier protein ThiS sulfurtransferase</fullName>
    </alternativeName>
    <alternativeName>
        <fullName evidence="1">Thiamine biosynthesis protein ThiI</fullName>
    </alternativeName>
    <alternativeName>
        <fullName evidence="1">tRNA 4-thiouridine synthase</fullName>
    </alternativeName>
</protein>